<accession>Q62HM5</accession>
<name>RL28_BURMA</name>
<sequence>MARVCQVTGKAPMSGNNVSHANNKTKRRFLPNLQNRRFWVESENRWVRLRVSNAGLRLIDKNGIDSVLADLRARGEA</sequence>
<reference key="1">
    <citation type="journal article" date="2004" name="Proc. Natl. Acad. Sci. U.S.A.">
        <title>Structural flexibility in the Burkholderia mallei genome.</title>
        <authorList>
            <person name="Nierman W.C."/>
            <person name="DeShazer D."/>
            <person name="Kim H.S."/>
            <person name="Tettelin H."/>
            <person name="Nelson K.E."/>
            <person name="Feldblyum T.V."/>
            <person name="Ulrich R.L."/>
            <person name="Ronning C.M."/>
            <person name="Brinkac L.M."/>
            <person name="Daugherty S.C."/>
            <person name="Davidsen T.D."/>
            <person name="DeBoy R.T."/>
            <person name="Dimitrov G."/>
            <person name="Dodson R.J."/>
            <person name="Durkin A.S."/>
            <person name="Gwinn M.L."/>
            <person name="Haft D.H."/>
            <person name="Khouri H.M."/>
            <person name="Kolonay J.F."/>
            <person name="Madupu R."/>
            <person name="Mohammoud Y."/>
            <person name="Nelson W.C."/>
            <person name="Radune D."/>
            <person name="Romero C.M."/>
            <person name="Sarria S."/>
            <person name="Selengut J."/>
            <person name="Shamblin C."/>
            <person name="Sullivan S.A."/>
            <person name="White O."/>
            <person name="Yu Y."/>
            <person name="Zafar N."/>
            <person name="Zhou L."/>
            <person name="Fraser C.M."/>
        </authorList>
    </citation>
    <scope>NUCLEOTIDE SEQUENCE [LARGE SCALE GENOMIC DNA]</scope>
    <source>
        <strain>ATCC 23344</strain>
    </source>
</reference>
<proteinExistence type="inferred from homology"/>
<feature type="chain" id="PRO_0000178447" description="Large ribosomal subunit protein bL28">
    <location>
        <begin position="1"/>
        <end position="77"/>
    </location>
</feature>
<feature type="region of interest" description="Disordered" evidence="2">
    <location>
        <begin position="1"/>
        <end position="25"/>
    </location>
</feature>
<protein>
    <recommendedName>
        <fullName evidence="1">Large ribosomal subunit protein bL28</fullName>
    </recommendedName>
    <alternativeName>
        <fullName evidence="3">50S ribosomal protein L28</fullName>
    </alternativeName>
</protein>
<gene>
    <name evidence="1" type="primary">rpmB</name>
    <name type="ordered locus">BMA2231</name>
</gene>
<dbReference type="EMBL" id="CP000010">
    <property type="protein sequence ID" value="AAU50256.1"/>
    <property type="molecule type" value="Genomic_DNA"/>
</dbReference>
<dbReference type="RefSeq" id="WP_004186391.1">
    <property type="nucleotide sequence ID" value="NC_006348.1"/>
</dbReference>
<dbReference type="RefSeq" id="YP_103795.1">
    <property type="nucleotide sequence ID" value="NC_006348.1"/>
</dbReference>
<dbReference type="SMR" id="Q62HM5"/>
<dbReference type="GeneID" id="98107656"/>
<dbReference type="KEGG" id="bma:BMA2231"/>
<dbReference type="PATRIC" id="fig|243160.12.peg.2295"/>
<dbReference type="eggNOG" id="COG0227">
    <property type="taxonomic scope" value="Bacteria"/>
</dbReference>
<dbReference type="HOGENOM" id="CLU_064548_3_1_4"/>
<dbReference type="PRO" id="PR:Q62HM5"/>
<dbReference type="Proteomes" id="UP000006693">
    <property type="component" value="Chromosome 1"/>
</dbReference>
<dbReference type="GO" id="GO:0022625">
    <property type="term" value="C:cytosolic large ribosomal subunit"/>
    <property type="evidence" value="ECO:0007669"/>
    <property type="project" value="TreeGrafter"/>
</dbReference>
<dbReference type="GO" id="GO:0003735">
    <property type="term" value="F:structural constituent of ribosome"/>
    <property type="evidence" value="ECO:0007669"/>
    <property type="project" value="InterPro"/>
</dbReference>
<dbReference type="GO" id="GO:0006412">
    <property type="term" value="P:translation"/>
    <property type="evidence" value="ECO:0007669"/>
    <property type="project" value="UniProtKB-UniRule"/>
</dbReference>
<dbReference type="FunFam" id="2.30.170.40:FF:000001">
    <property type="entry name" value="50S ribosomal protein L28"/>
    <property type="match status" value="1"/>
</dbReference>
<dbReference type="Gene3D" id="2.30.170.40">
    <property type="entry name" value="Ribosomal protein L28/L24"/>
    <property type="match status" value="1"/>
</dbReference>
<dbReference type="HAMAP" id="MF_00373">
    <property type="entry name" value="Ribosomal_bL28"/>
    <property type="match status" value="1"/>
</dbReference>
<dbReference type="InterPro" id="IPR026569">
    <property type="entry name" value="Ribosomal_bL28"/>
</dbReference>
<dbReference type="InterPro" id="IPR034704">
    <property type="entry name" value="Ribosomal_bL28/bL31-like_sf"/>
</dbReference>
<dbReference type="InterPro" id="IPR001383">
    <property type="entry name" value="Ribosomal_bL28_bact-type"/>
</dbReference>
<dbReference type="InterPro" id="IPR037147">
    <property type="entry name" value="Ribosomal_bL28_sf"/>
</dbReference>
<dbReference type="NCBIfam" id="TIGR00009">
    <property type="entry name" value="L28"/>
    <property type="match status" value="1"/>
</dbReference>
<dbReference type="PANTHER" id="PTHR13528">
    <property type="entry name" value="39S RIBOSOMAL PROTEIN L28, MITOCHONDRIAL"/>
    <property type="match status" value="1"/>
</dbReference>
<dbReference type="PANTHER" id="PTHR13528:SF2">
    <property type="entry name" value="LARGE RIBOSOMAL SUBUNIT PROTEIN BL28M"/>
    <property type="match status" value="1"/>
</dbReference>
<dbReference type="Pfam" id="PF00830">
    <property type="entry name" value="Ribosomal_L28"/>
    <property type="match status" value="1"/>
</dbReference>
<dbReference type="SUPFAM" id="SSF143800">
    <property type="entry name" value="L28p-like"/>
    <property type="match status" value="1"/>
</dbReference>
<evidence type="ECO:0000255" key="1">
    <source>
        <dbReference type="HAMAP-Rule" id="MF_00373"/>
    </source>
</evidence>
<evidence type="ECO:0000256" key="2">
    <source>
        <dbReference type="SAM" id="MobiDB-lite"/>
    </source>
</evidence>
<evidence type="ECO:0000305" key="3"/>
<organism>
    <name type="scientific">Burkholderia mallei (strain ATCC 23344)</name>
    <dbReference type="NCBI Taxonomy" id="243160"/>
    <lineage>
        <taxon>Bacteria</taxon>
        <taxon>Pseudomonadati</taxon>
        <taxon>Pseudomonadota</taxon>
        <taxon>Betaproteobacteria</taxon>
        <taxon>Burkholderiales</taxon>
        <taxon>Burkholderiaceae</taxon>
        <taxon>Burkholderia</taxon>
        <taxon>pseudomallei group</taxon>
    </lineage>
</organism>
<comment type="similarity">
    <text evidence="1">Belongs to the bacterial ribosomal protein bL28 family.</text>
</comment>
<keyword id="KW-1185">Reference proteome</keyword>
<keyword id="KW-0687">Ribonucleoprotein</keyword>
<keyword id="KW-0689">Ribosomal protein</keyword>